<sequence>MHFETVIGLEVHVELKTDSKMFSPSPAHFGAEPNSNTNVIDLAYPGVLPVVNKRAVDWAMRAAMALNMEIATESKFDRKNYFYPDNPKAYQISQFDQPIGENGYIDIEVDGETKRIGITRLHMEEDAGKSTHKGEYSLVDLNRQGTPLIEIVSEPDIRSPKEAYAYLEKLRSIIQYTGVSDVKMEEGSLRCDANISLRPYGQEKFGTKAELKNLNSFNYVRKGLEYEEKRQEEELLNGGEIGQETRRFDESTGKTILMRVKEGSDDYRYFPEPDIVPLYIDDAWKERVRQTIPELPDERKAKYVNELGLPAYDAHVLTLTKEMSDFFESTIEHGADVKLTSNWLMGGVNEYLNKNQVELLDTKLTPENLAGMIKLIEDGTMSSKIAKKVFPELAAKGGNAKQIMEDNGLVQISDEATLLKFVNEALDNNEQSVEDYKNGKGKAMGFLVGQIMKASKGQANPQLVNQLLKQELDKR</sequence>
<accession>A8Z2R3</accession>
<protein>
    <recommendedName>
        <fullName evidence="1">Aspartyl/glutamyl-tRNA(Asn/Gln) amidotransferase subunit B</fullName>
        <shortName evidence="1">Asp/Glu-ADT subunit B</shortName>
        <ecNumber evidence="1">6.3.5.-</ecNumber>
    </recommendedName>
</protein>
<proteinExistence type="inferred from homology"/>
<comment type="function">
    <text evidence="1">Allows the formation of correctly charged Asn-tRNA(Asn) or Gln-tRNA(Gln) through the transamidation of misacylated Asp-tRNA(Asn) or Glu-tRNA(Gln) in organisms which lack either or both of asparaginyl-tRNA or glutaminyl-tRNA synthetases. The reaction takes place in the presence of glutamine and ATP through an activated phospho-Asp-tRNA(Asn) or phospho-Glu-tRNA(Gln).</text>
</comment>
<comment type="catalytic activity">
    <reaction evidence="1">
        <text>L-glutamyl-tRNA(Gln) + L-glutamine + ATP + H2O = L-glutaminyl-tRNA(Gln) + L-glutamate + ADP + phosphate + H(+)</text>
        <dbReference type="Rhea" id="RHEA:17521"/>
        <dbReference type="Rhea" id="RHEA-COMP:9681"/>
        <dbReference type="Rhea" id="RHEA-COMP:9684"/>
        <dbReference type="ChEBI" id="CHEBI:15377"/>
        <dbReference type="ChEBI" id="CHEBI:15378"/>
        <dbReference type="ChEBI" id="CHEBI:29985"/>
        <dbReference type="ChEBI" id="CHEBI:30616"/>
        <dbReference type="ChEBI" id="CHEBI:43474"/>
        <dbReference type="ChEBI" id="CHEBI:58359"/>
        <dbReference type="ChEBI" id="CHEBI:78520"/>
        <dbReference type="ChEBI" id="CHEBI:78521"/>
        <dbReference type="ChEBI" id="CHEBI:456216"/>
    </reaction>
</comment>
<comment type="catalytic activity">
    <reaction evidence="1">
        <text>L-aspartyl-tRNA(Asn) + L-glutamine + ATP + H2O = L-asparaginyl-tRNA(Asn) + L-glutamate + ADP + phosphate + 2 H(+)</text>
        <dbReference type="Rhea" id="RHEA:14513"/>
        <dbReference type="Rhea" id="RHEA-COMP:9674"/>
        <dbReference type="Rhea" id="RHEA-COMP:9677"/>
        <dbReference type="ChEBI" id="CHEBI:15377"/>
        <dbReference type="ChEBI" id="CHEBI:15378"/>
        <dbReference type="ChEBI" id="CHEBI:29985"/>
        <dbReference type="ChEBI" id="CHEBI:30616"/>
        <dbReference type="ChEBI" id="CHEBI:43474"/>
        <dbReference type="ChEBI" id="CHEBI:58359"/>
        <dbReference type="ChEBI" id="CHEBI:78515"/>
        <dbReference type="ChEBI" id="CHEBI:78516"/>
        <dbReference type="ChEBI" id="CHEBI:456216"/>
    </reaction>
</comment>
<comment type="subunit">
    <text evidence="1">Heterotrimer of A, B and C subunits.</text>
</comment>
<comment type="similarity">
    <text evidence="1">Belongs to the GatB/GatE family. GatB subfamily.</text>
</comment>
<evidence type="ECO:0000255" key="1">
    <source>
        <dbReference type="HAMAP-Rule" id="MF_00121"/>
    </source>
</evidence>
<feature type="chain" id="PRO_1000076171" description="Aspartyl/glutamyl-tRNA(Asn/Gln) amidotransferase subunit B">
    <location>
        <begin position="1"/>
        <end position="475"/>
    </location>
</feature>
<gene>
    <name evidence="1" type="primary">gatB</name>
    <name type="ordered locus">USA300HOU_1900</name>
</gene>
<reference key="1">
    <citation type="journal article" date="2007" name="BMC Microbiol.">
        <title>Subtle genetic changes enhance virulence of methicillin resistant and sensitive Staphylococcus aureus.</title>
        <authorList>
            <person name="Highlander S.K."/>
            <person name="Hulten K.G."/>
            <person name="Qin X."/>
            <person name="Jiang H."/>
            <person name="Yerrapragada S."/>
            <person name="Mason E.O. Jr."/>
            <person name="Shang Y."/>
            <person name="Williams T.M."/>
            <person name="Fortunov R.M."/>
            <person name="Liu Y."/>
            <person name="Igboeli O."/>
            <person name="Petrosino J."/>
            <person name="Tirumalai M."/>
            <person name="Uzman A."/>
            <person name="Fox G.E."/>
            <person name="Cardenas A.M."/>
            <person name="Muzny D.M."/>
            <person name="Hemphill L."/>
            <person name="Ding Y."/>
            <person name="Dugan S."/>
            <person name="Blyth P.R."/>
            <person name="Buhay C.J."/>
            <person name="Dinh H.H."/>
            <person name="Hawes A.C."/>
            <person name="Holder M."/>
            <person name="Kovar C.L."/>
            <person name="Lee S.L."/>
            <person name="Liu W."/>
            <person name="Nazareth L.V."/>
            <person name="Wang Q."/>
            <person name="Zhou J."/>
            <person name="Kaplan S.L."/>
            <person name="Weinstock G.M."/>
        </authorList>
    </citation>
    <scope>NUCLEOTIDE SEQUENCE [LARGE SCALE GENOMIC DNA]</scope>
    <source>
        <strain>USA300 / TCH1516</strain>
    </source>
</reference>
<name>GATB_STAAT</name>
<keyword id="KW-0067">ATP-binding</keyword>
<keyword id="KW-0436">Ligase</keyword>
<keyword id="KW-0547">Nucleotide-binding</keyword>
<keyword id="KW-0648">Protein biosynthesis</keyword>
<organism>
    <name type="scientific">Staphylococcus aureus (strain USA300 / TCH1516)</name>
    <dbReference type="NCBI Taxonomy" id="451516"/>
    <lineage>
        <taxon>Bacteria</taxon>
        <taxon>Bacillati</taxon>
        <taxon>Bacillota</taxon>
        <taxon>Bacilli</taxon>
        <taxon>Bacillales</taxon>
        <taxon>Staphylococcaceae</taxon>
        <taxon>Staphylococcus</taxon>
    </lineage>
</organism>
<dbReference type="EC" id="6.3.5.-" evidence="1"/>
<dbReference type="EMBL" id="CP000730">
    <property type="protein sequence ID" value="ABX29902.1"/>
    <property type="molecule type" value="Genomic_DNA"/>
</dbReference>
<dbReference type="RefSeq" id="WP_000545370.1">
    <property type="nucleotide sequence ID" value="NC_010079.1"/>
</dbReference>
<dbReference type="SMR" id="A8Z2R3"/>
<dbReference type="KEGG" id="sax:USA300HOU_1900"/>
<dbReference type="HOGENOM" id="CLU_019240_0_0_9"/>
<dbReference type="GO" id="GO:0050566">
    <property type="term" value="F:asparaginyl-tRNA synthase (glutamine-hydrolyzing) activity"/>
    <property type="evidence" value="ECO:0007669"/>
    <property type="project" value="RHEA"/>
</dbReference>
<dbReference type="GO" id="GO:0005524">
    <property type="term" value="F:ATP binding"/>
    <property type="evidence" value="ECO:0007669"/>
    <property type="project" value="UniProtKB-KW"/>
</dbReference>
<dbReference type="GO" id="GO:0050567">
    <property type="term" value="F:glutaminyl-tRNA synthase (glutamine-hydrolyzing) activity"/>
    <property type="evidence" value="ECO:0007669"/>
    <property type="project" value="UniProtKB-UniRule"/>
</dbReference>
<dbReference type="GO" id="GO:0070681">
    <property type="term" value="P:glutaminyl-tRNAGln biosynthesis via transamidation"/>
    <property type="evidence" value="ECO:0007669"/>
    <property type="project" value="TreeGrafter"/>
</dbReference>
<dbReference type="GO" id="GO:0006412">
    <property type="term" value="P:translation"/>
    <property type="evidence" value="ECO:0007669"/>
    <property type="project" value="UniProtKB-UniRule"/>
</dbReference>
<dbReference type="FunFam" id="1.10.10.410:FF:000001">
    <property type="entry name" value="Aspartyl/glutamyl-tRNA(Asn/Gln) amidotransferase subunit B"/>
    <property type="match status" value="1"/>
</dbReference>
<dbReference type="FunFam" id="1.10.150.380:FF:000001">
    <property type="entry name" value="Aspartyl/glutamyl-tRNA(Asn/Gln) amidotransferase subunit B"/>
    <property type="match status" value="1"/>
</dbReference>
<dbReference type="Gene3D" id="1.10.10.410">
    <property type="match status" value="1"/>
</dbReference>
<dbReference type="Gene3D" id="1.10.150.380">
    <property type="entry name" value="GatB domain, N-terminal subdomain"/>
    <property type="match status" value="1"/>
</dbReference>
<dbReference type="HAMAP" id="MF_00121">
    <property type="entry name" value="GatB"/>
    <property type="match status" value="1"/>
</dbReference>
<dbReference type="InterPro" id="IPR017959">
    <property type="entry name" value="Asn/Gln-tRNA_amidoTrfase_suB/E"/>
</dbReference>
<dbReference type="InterPro" id="IPR006075">
    <property type="entry name" value="Asn/Gln-tRNA_Trfase_suB/E_cat"/>
</dbReference>
<dbReference type="InterPro" id="IPR018027">
    <property type="entry name" value="Asn/Gln_amidotransferase"/>
</dbReference>
<dbReference type="InterPro" id="IPR003789">
    <property type="entry name" value="Asn/Gln_tRNA_amidoTrase-B-like"/>
</dbReference>
<dbReference type="InterPro" id="IPR004413">
    <property type="entry name" value="GatB"/>
</dbReference>
<dbReference type="InterPro" id="IPR042114">
    <property type="entry name" value="GatB_C_1"/>
</dbReference>
<dbReference type="InterPro" id="IPR023168">
    <property type="entry name" value="GatB_Yqey_C_2"/>
</dbReference>
<dbReference type="InterPro" id="IPR017958">
    <property type="entry name" value="Gln-tRNA_amidoTrfase_suB_CS"/>
</dbReference>
<dbReference type="InterPro" id="IPR014746">
    <property type="entry name" value="Gln_synth/guanido_kin_cat_dom"/>
</dbReference>
<dbReference type="NCBIfam" id="TIGR00133">
    <property type="entry name" value="gatB"/>
    <property type="match status" value="1"/>
</dbReference>
<dbReference type="NCBIfam" id="NF004011">
    <property type="entry name" value="PRK05477.1-1"/>
    <property type="match status" value="1"/>
</dbReference>
<dbReference type="NCBIfam" id="NF004012">
    <property type="entry name" value="PRK05477.1-2"/>
    <property type="match status" value="1"/>
</dbReference>
<dbReference type="NCBIfam" id="NF004014">
    <property type="entry name" value="PRK05477.1-4"/>
    <property type="match status" value="1"/>
</dbReference>
<dbReference type="PANTHER" id="PTHR11659">
    <property type="entry name" value="GLUTAMYL-TRNA GLN AMIDOTRANSFERASE SUBUNIT B MITOCHONDRIAL AND PROKARYOTIC PET112-RELATED"/>
    <property type="match status" value="1"/>
</dbReference>
<dbReference type="PANTHER" id="PTHR11659:SF0">
    <property type="entry name" value="GLUTAMYL-TRNA(GLN) AMIDOTRANSFERASE SUBUNIT B, MITOCHONDRIAL"/>
    <property type="match status" value="1"/>
</dbReference>
<dbReference type="Pfam" id="PF02934">
    <property type="entry name" value="GatB_N"/>
    <property type="match status" value="1"/>
</dbReference>
<dbReference type="Pfam" id="PF02637">
    <property type="entry name" value="GatB_Yqey"/>
    <property type="match status" value="1"/>
</dbReference>
<dbReference type="SMART" id="SM00845">
    <property type="entry name" value="GatB_Yqey"/>
    <property type="match status" value="1"/>
</dbReference>
<dbReference type="SUPFAM" id="SSF89095">
    <property type="entry name" value="GatB/YqeY motif"/>
    <property type="match status" value="1"/>
</dbReference>
<dbReference type="SUPFAM" id="SSF55931">
    <property type="entry name" value="Glutamine synthetase/guanido kinase"/>
    <property type="match status" value="1"/>
</dbReference>
<dbReference type="PROSITE" id="PS01234">
    <property type="entry name" value="GATB"/>
    <property type="match status" value="1"/>
</dbReference>